<organism>
    <name type="scientific">Synechococcus sp. (strain CC9605)</name>
    <dbReference type="NCBI Taxonomy" id="110662"/>
    <lineage>
        <taxon>Bacteria</taxon>
        <taxon>Bacillati</taxon>
        <taxon>Cyanobacteriota</taxon>
        <taxon>Cyanophyceae</taxon>
        <taxon>Synechococcales</taxon>
        <taxon>Synechococcaceae</taxon>
        <taxon>Synechococcus</taxon>
    </lineage>
</organism>
<feature type="chain" id="PRO_1000145245" description="Urease accessory protein UreG">
    <location>
        <begin position="1"/>
        <end position="201"/>
    </location>
</feature>
<feature type="binding site" evidence="1">
    <location>
        <begin position="11"/>
        <end position="18"/>
    </location>
    <ligand>
        <name>GTP</name>
        <dbReference type="ChEBI" id="CHEBI:37565"/>
    </ligand>
</feature>
<evidence type="ECO:0000255" key="1">
    <source>
        <dbReference type="HAMAP-Rule" id="MF_01389"/>
    </source>
</evidence>
<sequence>MSSKLRLGVAGPVGSGKTALVEALCRRLRDDLQLAVVTNDIYTQEDAQFLTRAGALDPERIRGVETGGCPHTAIREDCSINRAAVAELEAQFPELDLVLVESGGDNLAASFSPELVDLCIYVIDVAAGDKIPRKGGPGITRSDLLVINKIDLAPQVGADLALMEQDTRRMRGDRPWCFTNLHSGEGLEQVLAFLSQQLPNS</sequence>
<comment type="function">
    <text evidence="1">Facilitates the functional incorporation of the urease nickel metallocenter. This process requires GTP hydrolysis, probably effectuated by UreG.</text>
</comment>
<comment type="subunit">
    <text evidence="1">Homodimer. UreD, UreF and UreG form a complex that acts as a GTP-hydrolysis-dependent molecular chaperone, activating the urease apoprotein by helping to assemble the nickel containing metallocenter of UreC. The UreE protein probably delivers the nickel.</text>
</comment>
<comment type="subcellular location">
    <subcellularLocation>
        <location evidence="1">Cytoplasm</location>
    </subcellularLocation>
</comment>
<comment type="similarity">
    <text evidence="1">Belongs to the SIMIBI class G3E GTPase family. UreG subfamily.</text>
</comment>
<dbReference type="EMBL" id="CP000110">
    <property type="protein sequence ID" value="ABB36346.1"/>
    <property type="molecule type" value="Genomic_DNA"/>
</dbReference>
<dbReference type="RefSeq" id="WP_011365541.1">
    <property type="nucleotide sequence ID" value="NC_007516.1"/>
</dbReference>
<dbReference type="SMR" id="Q3AGD6"/>
<dbReference type="STRING" id="110662.Syncc9605_2621"/>
<dbReference type="KEGG" id="syd:Syncc9605_2621"/>
<dbReference type="eggNOG" id="COG0378">
    <property type="taxonomic scope" value="Bacteria"/>
</dbReference>
<dbReference type="HOGENOM" id="CLU_072144_1_0_3"/>
<dbReference type="OrthoDB" id="9802035at2"/>
<dbReference type="GO" id="GO:0005737">
    <property type="term" value="C:cytoplasm"/>
    <property type="evidence" value="ECO:0007669"/>
    <property type="project" value="UniProtKB-SubCell"/>
</dbReference>
<dbReference type="GO" id="GO:0005525">
    <property type="term" value="F:GTP binding"/>
    <property type="evidence" value="ECO:0007669"/>
    <property type="project" value="UniProtKB-KW"/>
</dbReference>
<dbReference type="GO" id="GO:0003924">
    <property type="term" value="F:GTPase activity"/>
    <property type="evidence" value="ECO:0007669"/>
    <property type="project" value="InterPro"/>
</dbReference>
<dbReference type="GO" id="GO:0016151">
    <property type="term" value="F:nickel cation binding"/>
    <property type="evidence" value="ECO:0007669"/>
    <property type="project" value="UniProtKB-UniRule"/>
</dbReference>
<dbReference type="GO" id="GO:0043419">
    <property type="term" value="P:urea catabolic process"/>
    <property type="evidence" value="ECO:0007669"/>
    <property type="project" value="InterPro"/>
</dbReference>
<dbReference type="CDD" id="cd05540">
    <property type="entry name" value="UreG"/>
    <property type="match status" value="1"/>
</dbReference>
<dbReference type="FunFam" id="3.40.50.300:FF:000208">
    <property type="entry name" value="Urease accessory protein UreG"/>
    <property type="match status" value="1"/>
</dbReference>
<dbReference type="Gene3D" id="3.40.50.300">
    <property type="entry name" value="P-loop containing nucleotide triphosphate hydrolases"/>
    <property type="match status" value="1"/>
</dbReference>
<dbReference type="HAMAP" id="MF_01389">
    <property type="entry name" value="UreG"/>
    <property type="match status" value="1"/>
</dbReference>
<dbReference type="InterPro" id="IPR003495">
    <property type="entry name" value="CobW/HypB/UreG_nucleotide-bd"/>
</dbReference>
<dbReference type="InterPro" id="IPR027417">
    <property type="entry name" value="P-loop_NTPase"/>
</dbReference>
<dbReference type="InterPro" id="IPR004400">
    <property type="entry name" value="UreG"/>
</dbReference>
<dbReference type="NCBIfam" id="TIGR00101">
    <property type="entry name" value="ureG"/>
    <property type="match status" value="1"/>
</dbReference>
<dbReference type="PANTHER" id="PTHR31715">
    <property type="entry name" value="UREASE ACCESSORY PROTEIN G"/>
    <property type="match status" value="1"/>
</dbReference>
<dbReference type="PANTHER" id="PTHR31715:SF0">
    <property type="entry name" value="UREASE ACCESSORY PROTEIN G"/>
    <property type="match status" value="1"/>
</dbReference>
<dbReference type="Pfam" id="PF02492">
    <property type="entry name" value="cobW"/>
    <property type="match status" value="1"/>
</dbReference>
<dbReference type="PIRSF" id="PIRSF005624">
    <property type="entry name" value="Ni-bind_GTPase"/>
    <property type="match status" value="1"/>
</dbReference>
<dbReference type="SUPFAM" id="SSF52540">
    <property type="entry name" value="P-loop containing nucleoside triphosphate hydrolases"/>
    <property type="match status" value="1"/>
</dbReference>
<gene>
    <name evidence="1" type="primary">ureG</name>
    <name type="ordered locus">Syncc9605_2621</name>
</gene>
<proteinExistence type="inferred from homology"/>
<accession>Q3AGD6</accession>
<reference key="1">
    <citation type="submission" date="2005-07" db="EMBL/GenBank/DDBJ databases">
        <title>Complete sequence of Synechococcus sp. CC9605.</title>
        <authorList>
            <consortium name="US DOE Joint Genome Institute"/>
            <person name="Copeland A."/>
            <person name="Lucas S."/>
            <person name="Lapidus A."/>
            <person name="Barry K."/>
            <person name="Detter J.C."/>
            <person name="Glavina T."/>
            <person name="Hammon N."/>
            <person name="Israni S."/>
            <person name="Pitluck S."/>
            <person name="Schmutz J."/>
            <person name="Martinez M."/>
            <person name="Larimer F."/>
            <person name="Land M."/>
            <person name="Kyrpides N."/>
            <person name="Ivanova N."/>
            <person name="Richardson P."/>
        </authorList>
    </citation>
    <scope>NUCLEOTIDE SEQUENCE [LARGE SCALE GENOMIC DNA]</scope>
    <source>
        <strain>CC9605</strain>
    </source>
</reference>
<name>UREG_SYNSC</name>
<keyword id="KW-0143">Chaperone</keyword>
<keyword id="KW-0963">Cytoplasm</keyword>
<keyword id="KW-0342">GTP-binding</keyword>
<keyword id="KW-0996">Nickel insertion</keyword>
<keyword id="KW-0547">Nucleotide-binding</keyword>
<protein>
    <recommendedName>
        <fullName evidence="1">Urease accessory protein UreG</fullName>
    </recommendedName>
</protein>